<reference key="1">
    <citation type="journal article" date="2013" name="Stand. Genomic Sci.">
        <title>Complete genome sequence of Arthrobacter sp. strain FB24.</title>
        <authorList>
            <person name="Nakatsu C.H."/>
            <person name="Barabote R."/>
            <person name="Thompson S."/>
            <person name="Bruce D."/>
            <person name="Detter C."/>
            <person name="Brettin T."/>
            <person name="Han C."/>
            <person name="Beasley F."/>
            <person name="Chen W."/>
            <person name="Konopka A."/>
            <person name="Xie G."/>
        </authorList>
    </citation>
    <scope>NUCLEOTIDE SEQUENCE [LARGE SCALE GENOMIC DNA]</scope>
    <source>
        <strain>FB24</strain>
    </source>
</reference>
<comment type="function">
    <text evidence="1">Involved in the biosynthesis of branched-chain amino acids (BCAA). Catalyzes an alkyl-migration followed by a ketol-acid reduction of (S)-2-acetolactate (S2AL) to yield (R)-2,3-dihydroxy-isovalerate. In the isomerase reaction, S2AL is rearranged via a Mg-dependent methyl migration to produce 3-hydroxy-3-methyl-2-ketobutyrate (HMKB). In the reductase reaction, this 2-ketoacid undergoes a metal-dependent reduction by NADPH to yield (R)-2,3-dihydroxy-isovalerate.</text>
</comment>
<comment type="catalytic activity">
    <reaction evidence="1">
        <text>(2R)-2,3-dihydroxy-3-methylbutanoate + NADP(+) = (2S)-2-acetolactate + NADPH + H(+)</text>
        <dbReference type="Rhea" id="RHEA:22068"/>
        <dbReference type="ChEBI" id="CHEBI:15378"/>
        <dbReference type="ChEBI" id="CHEBI:49072"/>
        <dbReference type="ChEBI" id="CHEBI:57783"/>
        <dbReference type="ChEBI" id="CHEBI:58349"/>
        <dbReference type="ChEBI" id="CHEBI:58476"/>
        <dbReference type="EC" id="1.1.1.86"/>
    </reaction>
</comment>
<comment type="catalytic activity">
    <reaction evidence="1">
        <text>(2R,3R)-2,3-dihydroxy-3-methylpentanoate + NADP(+) = (S)-2-ethyl-2-hydroxy-3-oxobutanoate + NADPH + H(+)</text>
        <dbReference type="Rhea" id="RHEA:13493"/>
        <dbReference type="ChEBI" id="CHEBI:15378"/>
        <dbReference type="ChEBI" id="CHEBI:49256"/>
        <dbReference type="ChEBI" id="CHEBI:49258"/>
        <dbReference type="ChEBI" id="CHEBI:57783"/>
        <dbReference type="ChEBI" id="CHEBI:58349"/>
        <dbReference type="EC" id="1.1.1.86"/>
    </reaction>
</comment>
<comment type="cofactor">
    <cofactor evidence="1">
        <name>Mg(2+)</name>
        <dbReference type="ChEBI" id="CHEBI:18420"/>
    </cofactor>
    <text evidence="1">Binds 2 magnesium ions per subunit.</text>
</comment>
<comment type="pathway">
    <text evidence="1">Amino-acid biosynthesis; L-isoleucine biosynthesis; L-isoleucine from 2-oxobutanoate: step 2/4.</text>
</comment>
<comment type="pathway">
    <text evidence="1">Amino-acid biosynthesis; L-valine biosynthesis; L-valine from pyruvate: step 2/4.</text>
</comment>
<comment type="similarity">
    <text evidence="1">Belongs to the ketol-acid reductoisomerase family.</text>
</comment>
<keyword id="KW-0028">Amino-acid biosynthesis</keyword>
<keyword id="KW-0100">Branched-chain amino acid biosynthesis</keyword>
<keyword id="KW-0460">Magnesium</keyword>
<keyword id="KW-0479">Metal-binding</keyword>
<keyword id="KW-0521">NADP</keyword>
<keyword id="KW-0560">Oxidoreductase</keyword>
<keyword id="KW-1185">Reference proteome</keyword>
<name>ILVC_ARTS2</name>
<organism>
    <name type="scientific">Arthrobacter sp. (strain FB24)</name>
    <dbReference type="NCBI Taxonomy" id="290399"/>
    <lineage>
        <taxon>Bacteria</taxon>
        <taxon>Bacillati</taxon>
        <taxon>Actinomycetota</taxon>
        <taxon>Actinomycetes</taxon>
        <taxon>Micrococcales</taxon>
        <taxon>Micrococcaceae</taxon>
        <taxon>Arthrobacter</taxon>
    </lineage>
</organism>
<evidence type="ECO:0000255" key="1">
    <source>
        <dbReference type="HAMAP-Rule" id="MF_00435"/>
    </source>
</evidence>
<evidence type="ECO:0000255" key="2">
    <source>
        <dbReference type="PROSITE-ProRule" id="PRU01197"/>
    </source>
</evidence>
<evidence type="ECO:0000255" key="3">
    <source>
        <dbReference type="PROSITE-ProRule" id="PRU01198"/>
    </source>
</evidence>
<proteinExistence type="inferred from homology"/>
<dbReference type="EC" id="1.1.1.86" evidence="1"/>
<dbReference type="EMBL" id="CP000454">
    <property type="protein sequence ID" value="ABK03916.1"/>
    <property type="molecule type" value="Genomic_DNA"/>
</dbReference>
<dbReference type="RefSeq" id="WP_011692378.1">
    <property type="nucleotide sequence ID" value="NC_008541.1"/>
</dbReference>
<dbReference type="SMR" id="A0JXZ6"/>
<dbReference type="STRING" id="290399.Arth_2537"/>
<dbReference type="KEGG" id="art:Arth_2537"/>
<dbReference type="eggNOG" id="COG0059">
    <property type="taxonomic scope" value="Bacteria"/>
</dbReference>
<dbReference type="HOGENOM" id="CLU_033821_0_1_11"/>
<dbReference type="OrthoDB" id="9804088at2"/>
<dbReference type="UniPathway" id="UPA00047">
    <property type="reaction ID" value="UER00056"/>
</dbReference>
<dbReference type="UniPathway" id="UPA00049">
    <property type="reaction ID" value="UER00060"/>
</dbReference>
<dbReference type="Proteomes" id="UP000000754">
    <property type="component" value="Chromosome"/>
</dbReference>
<dbReference type="GO" id="GO:0005829">
    <property type="term" value="C:cytosol"/>
    <property type="evidence" value="ECO:0007669"/>
    <property type="project" value="TreeGrafter"/>
</dbReference>
<dbReference type="GO" id="GO:0004455">
    <property type="term" value="F:ketol-acid reductoisomerase activity"/>
    <property type="evidence" value="ECO:0007669"/>
    <property type="project" value="UniProtKB-UniRule"/>
</dbReference>
<dbReference type="GO" id="GO:0000287">
    <property type="term" value="F:magnesium ion binding"/>
    <property type="evidence" value="ECO:0007669"/>
    <property type="project" value="UniProtKB-UniRule"/>
</dbReference>
<dbReference type="GO" id="GO:0050661">
    <property type="term" value="F:NADP binding"/>
    <property type="evidence" value="ECO:0007669"/>
    <property type="project" value="InterPro"/>
</dbReference>
<dbReference type="GO" id="GO:0009097">
    <property type="term" value="P:isoleucine biosynthetic process"/>
    <property type="evidence" value="ECO:0007669"/>
    <property type="project" value="UniProtKB-UniRule"/>
</dbReference>
<dbReference type="GO" id="GO:0009099">
    <property type="term" value="P:L-valine biosynthetic process"/>
    <property type="evidence" value="ECO:0007669"/>
    <property type="project" value="UniProtKB-UniRule"/>
</dbReference>
<dbReference type="FunFam" id="3.40.50.720:FF:000023">
    <property type="entry name" value="Ketol-acid reductoisomerase (NADP(+))"/>
    <property type="match status" value="1"/>
</dbReference>
<dbReference type="Gene3D" id="6.10.240.10">
    <property type="match status" value="1"/>
</dbReference>
<dbReference type="Gene3D" id="3.40.50.720">
    <property type="entry name" value="NAD(P)-binding Rossmann-like Domain"/>
    <property type="match status" value="1"/>
</dbReference>
<dbReference type="HAMAP" id="MF_00435">
    <property type="entry name" value="IlvC"/>
    <property type="match status" value="1"/>
</dbReference>
<dbReference type="InterPro" id="IPR008927">
    <property type="entry name" value="6-PGluconate_DH-like_C_sf"/>
</dbReference>
<dbReference type="InterPro" id="IPR013023">
    <property type="entry name" value="KARI"/>
</dbReference>
<dbReference type="InterPro" id="IPR000506">
    <property type="entry name" value="KARI_C"/>
</dbReference>
<dbReference type="InterPro" id="IPR013116">
    <property type="entry name" value="KARI_N"/>
</dbReference>
<dbReference type="InterPro" id="IPR014359">
    <property type="entry name" value="KARI_prok"/>
</dbReference>
<dbReference type="InterPro" id="IPR036291">
    <property type="entry name" value="NAD(P)-bd_dom_sf"/>
</dbReference>
<dbReference type="NCBIfam" id="TIGR00465">
    <property type="entry name" value="ilvC"/>
    <property type="match status" value="1"/>
</dbReference>
<dbReference type="NCBIfam" id="NF004017">
    <property type="entry name" value="PRK05479.1"/>
    <property type="match status" value="1"/>
</dbReference>
<dbReference type="NCBIfam" id="NF009940">
    <property type="entry name" value="PRK13403.1"/>
    <property type="match status" value="1"/>
</dbReference>
<dbReference type="PANTHER" id="PTHR21371">
    <property type="entry name" value="KETOL-ACID REDUCTOISOMERASE, MITOCHONDRIAL"/>
    <property type="match status" value="1"/>
</dbReference>
<dbReference type="PANTHER" id="PTHR21371:SF1">
    <property type="entry name" value="KETOL-ACID REDUCTOISOMERASE, MITOCHONDRIAL"/>
    <property type="match status" value="1"/>
</dbReference>
<dbReference type="Pfam" id="PF01450">
    <property type="entry name" value="KARI_C"/>
    <property type="match status" value="1"/>
</dbReference>
<dbReference type="Pfam" id="PF07991">
    <property type="entry name" value="KARI_N"/>
    <property type="match status" value="1"/>
</dbReference>
<dbReference type="PIRSF" id="PIRSF000116">
    <property type="entry name" value="IlvC_gammaproteo"/>
    <property type="match status" value="1"/>
</dbReference>
<dbReference type="SUPFAM" id="SSF48179">
    <property type="entry name" value="6-phosphogluconate dehydrogenase C-terminal domain-like"/>
    <property type="match status" value="1"/>
</dbReference>
<dbReference type="SUPFAM" id="SSF51735">
    <property type="entry name" value="NAD(P)-binding Rossmann-fold domains"/>
    <property type="match status" value="1"/>
</dbReference>
<dbReference type="PROSITE" id="PS51851">
    <property type="entry name" value="KARI_C"/>
    <property type="match status" value="1"/>
</dbReference>
<dbReference type="PROSITE" id="PS51850">
    <property type="entry name" value="KARI_N"/>
    <property type="match status" value="1"/>
</dbReference>
<protein>
    <recommendedName>
        <fullName evidence="1">Ketol-acid reductoisomerase (NADP(+))</fullName>
        <shortName evidence="1">KARI</shortName>
        <ecNumber evidence="1">1.1.1.86</ecNumber>
    </recommendedName>
    <alternativeName>
        <fullName evidence="1">Acetohydroxy-acid isomeroreductase</fullName>
        <shortName evidence="1">AHIR</shortName>
    </alternativeName>
    <alternativeName>
        <fullName evidence="1">Alpha-keto-beta-hydroxylacyl reductoisomerase</fullName>
    </alternativeName>
    <alternativeName>
        <fullName evidence="1">Ketol-acid reductoisomerase type 1</fullName>
    </alternativeName>
    <alternativeName>
        <fullName evidence="1">Ketol-acid reductoisomerase type I</fullName>
    </alternativeName>
</protein>
<accession>A0JXZ6</accession>
<sequence length="341" mass="37189">MTEMFYDDDADLSIIQGRKVAIVGYGSQGHAHALNLRDSGVEVTIALKEGSSSIAKAQDAGFTVKNVADAAEWADVIMILAPDQHQRSIYNDSIKDKLTPGKALAFAHGFNIRFGYIKAPEGVDVILIAPKAPGHTVRREFEAGRGIPDIIAVEQDATGAAWDLAKSYAKAIGGTRAGVIKTTFTEETETDLFGEQAVLCGGVSQLVQYGFETLTEAGYQPQIAYFEVLHELKLIVDLMWEGGIAKQRWSVSDTAEYGDYVSGPRVITPEVKENMKAVLADIQNGAFAKRFIEDQDNGGVEFKALRAKAEQHPIESVGRELRGLFSWQQQDEDYVEGSAAR</sequence>
<gene>
    <name evidence="1" type="primary">ilvC</name>
    <name type="ordered locus">Arth_2537</name>
</gene>
<feature type="chain" id="PRO_1000050477" description="Ketol-acid reductoisomerase (NADP(+))">
    <location>
        <begin position="1"/>
        <end position="341"/>
    </location>
</feature>
<feature type="domain" description="KARI N-terminal Rossmann" evidence="2">
    <location>
        <begin position="1"/>
        <end position="182"/>
    </location>
</feature>
<feature type="domain" description="KARI C-terminal knotted" evidence="3">
    <location>
        <begin position="183"/>
        <end position="328"/>
    </location>
</feature>
<feature type="active site" evidence="1">
    <location>
        <position position="108"/>
    </location>
</feature>
<feature type="binding site" evidence="1">
    <location>
        <begin position="25"/>
        <end position="28"/>
    </location>
    <ligand>
        <name>NADP(+)</name>
        <dbReference type="ChEBI" id="CHEBI:58349"/>
    </ligand>
</feature>
<feature type="binding site" evidence="1">
    <location>
        <position position="48"/>
    </location>
    <ligand>
        <name>NADP(+)</name>
        <dbReference type="ChEBI" id="CHEBI:58349"/>
    </ligand>
</feature>
<feature type="binding site" evidence="1">
    <location>
        <position position="51"/>
    </location>
    <ligand>
        <name>NADP(+)</name>
        <dbReference type="ChEBI" id="CHEBI:58349"/>
    </ligand>
</feature>
<feature type="binding site" evidence="1">
    <location>
        <position position="53"/>
    </location>
    <ligand>
        <name>NADP(+)</name>
        <dbReference type="ChEBI" id="CHEBI:58349"/>
    </ligand>
</feature>
<feature type="binding site" evidence="1">
    <location>
        <begin position="83"/>
        <end position="86"/>
    </location>
    <ligand>
        <name>NADP(+)</name>
        <dbReference type="ChEBI" id="CHEBI:58349"/>
    </ligand>
</feature>
<feature type="binding site" evidence="1">
    <location>
        <position position="134"/>
    </location>
    <ligand>
        <name>NADP(+)</name>
        <dbReference type="ChEBI" id="CHEBI:58349"/>
    </ligand>
</feature>
<feature type="binding site" evidence="1">
    <location>
        <position position="191"/>
    </location>
    <ligand>
        <name>Mg(2+)</name>
        <dbReference type="ChEBI" id="CHEBI:18420"/>
        <label>1</label>
    </ligand>
</feature>
<feature type="binding site" evidence="1">
    <location>
        <position position="191"/>
    </location>
    <ligand>
        <name>Mg(2+)</name>
        <dbReference type="ChEBI" id="CHEBI:18420"/>
        <label>2</label>
    </ligand>
</feature>
<feature type="binding site" evidence="1">
    <location>
        <position position="195"/>
    </location>
    <ligand>
        <name>Mg(2+)</name>
        <dbReference type="ChEBI" id="CHEBI:18420"/>
        <label>1</label>
    </ligand>
</feature>
<feature type="binding site" evidence="1">
    <location>
        <position position="227"/>
    </location>
    <ligand>
        <name>Mg(2+)</name>
        <dbReference type="ChEBI" id="CHEBI:18420"/>
        <label>2</label>
    </ligand>
</feature>
<feature type="binding site" evidence="1">
    <location>
        <position position="231"/>
    </location>
    <ligand>
        <name>Mg(2+)</name>
        <dbReference type="ChEBI" id="CHEBI:18420"/>
        <label>2</label>
    </ligand>
</feature>
<feature type="binding site" evidence="1">
    <location>
        <position position="252"/>
    </location>
    <ligand>
        <name>substrate</name>
    </ligand>
</feature>